<organism>
    <name type="scientific">Vibrio cholerae serotype O1 (strain ATCC 39315 / El Tor Inaba N16961)</name>
    <dbReference type="NCBI Taxonomy" id="243277"/>
    <lineage>
        <taxon>Bacteria</taxon>
        <taxon>Pseudomonadati</taxon>
        <taxon>Pseudomonadota</taxon>
        <taxon>Gammaproteobacteria</taxon>
        <taxon>Vibrionales</taxon>
        <taxon>Vibrionaceae</taxon>
        <taxon>Vibrio</taxon>
    </lineage>
</organism>
<name>MURE_VIBCH</name>
<evidence type="ECO:0000255" key="1">
    <source>
        <dbReference type="HAMAP-Rule" id="MF_00208"/>
    </source>
</evidence>
<evidence type="ECO:0000305" key="2"/>
<comment type="function">
    <text evidence="1">Catalyzes the addition of meso-diaminopimelic acid to the nucleotide precursor UDP-N-acetylmuramoyl-L-alanyl-D-glutamate (UMAG) in the biosynthesis of bacterial cell-wall peptidoglycan.</text>
</comment>
<comment type="catalytic activity">
    <reaction evidence="1">
        <text>UDP-N-acetyl-alpha-D-muramoyl-L-alanyl-D-glutamate + meso-2,6-diaminopimelate + ATP = UDP-N-acetyl-alpha-D-muramoyl-L-alanyl-gamma-D-glutamyl-meso-2,6-diaminopimelate + ADP + phosphate + H(+)</text>
        <dbReference type="Rhea" id="RHEA:23676"/>
        <dbReference type="ChEBI" id="CHEBI:15378"/>
        <dbReference type="ChEBI" id="CHEBI:30616"/>
        <dbReference type="ChEBI" id="CHEBI:43474"/>
        <dbReference type="ChEBI" id="CHEBI:57791"/>
        <dbReference type="ChEBI" id="CHEBI:83900"/>
        <dbReference type="ChEBI" id="CHEBI:83905"/>
        <dbReference type="ChEBI" id="CHEBI:456216"/>
        <dbReference type="EC" id="6.3.2.13"/>
    </reaction>
</comment>
<comment type="cofactor">
    <cofactor evidence="1">
        <name>Mg(2+)</name>
        <dbReference type="ChEBI" id="CHEBI:18420"/>
    </cofactor>
</comment>
<comment type="pathway">
    <text evidence="1">Cell wall biogenesis; peptidoglycan biosynthesis.</text>
</comment>
<comment type="subcellular location">
    <subcellularLocation>
        <location evidence="1">Cytoplasm</location>
    </subcellularLocation>
</comment>
<comment type="PTM">
    <text evidence="1">Carboxylation is probably crucial for Mg(2+) binding and, consequently, for the gamma-phosphate positioning of ATP.</text>
</comment>
<comment type="similarity">
    <text evidence="1">Belongs to the MurCDEF family. MurE subfamily.</text>
</comment>
<comment type="sequence caution" evidence="2">
    <conflict type="erroneous initiation">
        <sequence resource="EMBL-CDS" id="AAF95549"/>
    </conflict>
</comment>
<protein>
    <recommendedName>
        <fullName evidence="1">UDP-N-acetylmuramoyl-L-alanyl-D-glutamate--2,6-diaminopimelate ligase</fullName>
        <ecNumber evidence="1">6.3.2.13</ecNumber>
    </recommendedName>
    <alternativeName>
        <fullName evidence="1">Meso-A2pm-adding enzyme</fullName>
    </alternativeName>
    <alternativeName>
        <fullName evidence="1">Meso-diaminopimelate-adding enzyme</fullName>
    </alternativeName>
    <alternativeName>
        <fullName evidence="1">UDP-MurNAc-L-Ala-D-Glu:meso-diaminopimelate ligase</fullName>
    </alternativeName>
    <alternativeName>
        <fullName evidence="1">UDP-MurNAc-tripeptide synthetase</fullName>
    </alternativeName>
    <alternativeName>
        <fullName evidence="1">UDP-N-acetylmuramyl-tripeptide synthetase</fullName>
    </alternativeName>
</protein>
<accession>Q9X6N4</accession>
<accession>Q9KPG2</accession>
<gene>
    <name evidence="1" type="primary">murE</name>
    <name type="ordered locus">VC_2406</name>
</gene>
<proteinExistence type="inferred from homology"/>
<reference key="1">
    <citation type="submission" date="1999-12" db="EMBL/GenBank/DDBJ databases">
        <title>Probable murE gene of Vibrio cholerae, probable Vibrio cholerae UDP-N-acetylmuramoylalanyl-D-glutamate--2,6-diaminopimelate ligase (UDP-N-acetylmuramyl-tripeptide synthetase).</title>
        <authorList>
            <person name="Chakrabortty A."/>
            <person name="Chaudhuri K."/>
        </authorList>
    </citation>
    <scope>NUCLEOTIDE SEQUENCE [GENOMIC DNA]</scope>
    <source>
        <strain>ATCC 25870 / Classical Inaba 569B / Serotype O1</strain>
    </source>
</reference>
<reference key="2">
    <citation type="journal article" date="2000" name="Nature">
        <title>DNA sequence of both chromosomes of the cholera pathogen Vibrio cholerae.</title>
        <authorList>
            <person name="Heidelberg J.F."/>
            <person name="Eisen J.A."/>
            <person name="Nelson W.C."/>
            <person name="Clayton R.A."/>
            <person name="Gwinn M.L."/>
            <person name="Dodson R.J."/>
            <person name="Haft D.H."/>
            <person name="Hickey E.K."/>
            <person name="Peterson J.D."/>
            <person name="Umayam L.A."/>
            <person name="Gill S.R."/>
            <person name="Nelson K.E."/>
            <person name="Read T.D."/>
            <person name="Tettelin H."/>
            <person name="Richardson D.L."/>
            <person name="Ermolaeva M.D."/>
            <person name="Vamathevan J.J."/>
            <person name="Bass S."/>
            <person name="Qin H."/>
            <person name="Dragoi I."/>
            <person name="Sellers P."/>
            <person name="McDonald L.A."/>
            <person name="Utterback T.R."/>
            <person name="Fleischmann R.D."/>
            <person name="Nierman W.C."/>
            <person name="White O."/>
            <person name="Salzberg S.L."/>
            <person name="Smith H.O."/>
            <person name="Colwell R.R."/>
            <person name="Mekalanos J.J."/>
            <person name="Venter J.C."/>
            <person name="Fraser C.M."/>
        </authorList>
    </citation>
    <scope>NUCLEOTIDE SEQUENCE [LARGE SCALE GENOMIC DNA]</scope>
    <source>
        <strain>ATCC 39315 / El Tor Inaba N16961</strain>
    </source>
</reference>
<feature type="chain" id="PRO_0000101967" description="UDP-N-acetylmuramoyl-L-alanyl-D-glutamate--2,6-diaminopimelate ligase">
    <location>
        <begin position="1"/>
        <end position="495"/>
    </location>
</feature>
<feature type="short sequence motif" description="Meso-diaminopimelate recognition motif">
    <location>
        <begin position="414"/>
        <end position="417"/>
    </location>
</feature>
<feature type="binding site" evidence="1">
    <location>
        <position position="32"/>
    </location>
    <ligand>
        <name>UDP-N-acetyl-alpha-D-muramoyl-L-alanyl-D-glutamate</name>
        <dbReference type="ChEBI" id="CHEBI:83900"/>
    </ligand>
</feature>
<feature type="binding site" evidence="1">
    <location>
        <position position="34"/>
    </location>
    <ligand>
        <name>UDP-N-acetyl-alpha-D-muramoyl-L-alanyl-D-glutamate</name>
        <dbReference type="ChEBI" id="CHEBI:83900"/>
    </ligand>
</feature>
<feature type="binding site" evidence="1">
    <location>
        <begin position="119"/>
        <end position="125"/>
    </location>
    <ligand>
        <name>ATP</name>
        <dbReference type="ChEBI" id="CHEBI:30616"/>
    </ligand>
</feature>
<feature type="binding site" evidence="1">
    <location>
        <position position="160"/>
    </location>
    <ligand>
        <name>UDP-N-acetyl-alpha-D-muramoyl-L-alanyl-D-glutamate</name>
        <dbReference type="ChEBI" id="CHEBI:83900"/>
    </ligand>
</feature>
<feature type="binding site" evidence="1">
    <location>
        <begin position="161"/>
        <end position="162"/>
    </location>
    <ligand>
        <name>UDP-N-acetyl-alpha-D-muramoyl-L-alanyl-D-glutamate</name>
        <dbReference type="ChEBI" id="CHEBI:83900"/>
    </ligand>
</feature>
<feature type="binding site" evidence="1">
    <location>
        <position position="188"/>
    </location>
    <ligand>
        <name>UDP-N-acetyl-alpha-D-muramoyl-L-alanyl-D-glutamate</name>
        <dbReference type="ChEBI" id="CHEBI:83900"/>
    </ligand>
</feature>
<feature type="binding site" evidence="1">
    <location>
        <position position="194"/>
    </location>
    <ligand>
        <name>UDP-N-acetyl-alpha-D-muramoyl-L-alanyl-D-glutamate</name>
        <dbReference type="ChEBI" id="CHEBI:83900"/>
    </ligand>
</feature>
<feature type="binding site" evidence="1">
    <location>
        <position position="196"/>
    </location>
    <ligand>
        <name>UDP-N-acetyl-alpha-D-muramoyl-L-alanyl-D-glutamate</name>
        <dbReference type="ChEBI" id="CHEBI:83900"/>
    </ligand>
</feature>
<feature type="binding site" evidence="1">
    <location>
        <position position="390"/>
    </location>
    <ligand>
        <name>meso-2,6-diaminopimelate</name>
        <dbReference type="ChEBI" id="CHEBI:57791"/>
    </ligand>
</feature>
<feature type="binding site" evidence="1">
    <location>
        <begin position="414"/>
        <end position="417"/>
    </location>
    <ligand>
        <name>meso-2,6-diaminopimelate</name>
        <dbReference type="ChEBI" id="CHEBI:57791"/>
    </ligand>
</feature>
<feature type="binding site" evidence="1">
    <location>
        <position position="465"/>
    </location>
    <ligand>
        <name>meso-2,6-diaminopimelate</name>
        <dbReference type="ChEBI" id="CHEBI:57791"/>
    </ligand>
</feature>
<feature type="binding site" evidence="1">
    <location>
        <position position="469"/>
    </location>
    <ligand>
        <name>meso-2,6-diaminopimelate</name>
        <dbReference type="ChEBI" id="CHEBI:57791"/>
    </ligand>
</feature>
<feature type="modified residue" description="N6-carboxylysine" evidence="1">
    <location>
        <position position="228"/>
    </location>
</feature>
<feature type="sequence conflict" description="In Ref. 1; AAD29718." evidence="2" ref="1">
    <original>V</original>
    <variation>E</variation>
    <location>
        <position position="51"/>
    </location>
</feature>
<dbReference type="EC" id="6.3.2.13" evidence="1"/>
<dbReference type="EMBL" id="AF141867">
    <property type="protein sequence ID" value="AAD29718.2"/>
    <property type="molecule type" value="Genomic_DNA"/>
</dbReference>
<dbReference type="EMBL" id="AE003852">
    <property type="protein sequence ID" value="AAF95549.1"/>
    <property type="status" value="ALT_INIT"/>
    <property type="molecule type" value="Genomic_DNA"/>
</dbReference>
<dbReference type="PIR" id="B82082">
    <property type="entry name" value="B82082"/>
</dbReference>
<dbReference type="RefSeq" id="NP_232036.1">
    <property type="nucleotide sequence ID" value="NC_002505.1"/>
</dbReference>
<dbReference type="RefSeq" id="WP_001091880.1">
    <property type="nucleotide sequence ID" value="NZ_LT906614.1"/>
</dbReference>
<dbReference type="SMR" id="Q9X6N4"/>
<dbReference type="STRING" id="243277.VC_2406"/>
<dbReference type="DNASU" id="2613075"/>
<dbReference type="EnsemblBacteria" id="AAF95549">
    <property type="protein sequence ID" value="AAF95549"/>
    <property type="gene ID" value="VC_2406"/>
</dbReference>
<dbReference type="KEGG" id="vch:VC_2406"/>
<dbReference type="PATRIC" id="fig|243277.26.peg.2291"/>
<dbReference type="eggNOG" id="COG0769">
    <property type="taxonomic scope" value="Bacteria"/>
</dbReference>
<dbReference type="HOGENOM" id="CLU_022291_3_2_6"/>
<dbReference type="UniPathway" id="UPA00219"/>
<dbReference type="Proteomes" id="UP000000584">
    <property type="component" value="Chromosome 1"/>
</dbReference>
<dbReference type="GO" id="GO:0005737">
    <property type="term" value="C:cytoplasm"/>
    <property type="evidence" value="ECO:0007669"/>
    <property type="project" value="UniProtKB-SubCell"/>
</dbReference>
<dbReference type="GO" id="GO:0005524">
    <property type="term" value="F:ATP binding"/>
    <property type="evidence" value="ECO:0007669"/>
    <property type="project" value="UniProtKB-UniRule"/>
</dbReference>
<dbReference type="GO" id="GO:0000287">
    <property type="term" value="F:magnesium ion binding"/>
    <property type="evidence" value="ECO:0007669"/>
    <property type="project" value="UniProtKB-UniRule"/>
</dbReference>
<dbReference type="GO" id="GO:0008765">
    <property type="term" value="F:UDP-N-acetylmuramoylalanyl-D-glutamate-2,6-diaminopimelate ligase activity"/>
    <property type="evidence" value="ECO:0007669"/>
    <property type="project" value="UniProtKB-UniRule"/>
</dbReference>
<dbReference type="GO" id="GO:0051301">
    <property type="term" value="P:cell division"/>
    <property type="evidence" value="ECO:0007669"/>
    <property type="project" value="UniProtKB-KW"/>
</dbReference>
<dbReference type="GO" id="GO:0071555">
    <property type="term" value="P:cell wall organization"/>
    <property type="evidence" value="ECO:0007669"/>
    <property type="project" value="UniProtKB-KW"/>
</dbReference>
<dbReference type="GO" id="GO:0009252">
    <property type="term" value="P:peptidoglycan biosynthetic process"/>
    <property type="evidence" value="ECO:0007669"/>
    <property type="project" value="UniProtKB-UniRule"/>
</dbReference>
<dbReference type="GO" id="GO:0008360">
    <property type="term" value="P:regulation of cell shape"/>
    <property type="evidence" value="ECO:0007669"/>
    <property type="project" value="UniProtKB-KW"/>
</dbReference>
<dbReference type="FunFam" id="3.40.1190.10:FF:000006">
    <property type="entry name" value="UDP-N-acetylmuramoyl-L-alanyl-D-glutamate--2,6-diaminopimelate ligase"/>
    <property type="match status" value="1"/>
</dbReference>
<dbReference type="FunFam" id="3.90.190.20:FF:000006">
    <property type="entry name" value="UDP-N-acetylmuramoyl-L-alanyl-D-glutamate--2,6-diaminopimelate ligase"/>
    <property type="match status" value="1"/>
</dbReference>
<dbReference type="Gene3D" id="3.90.190.20">
    <property type="entry name" value="Mur ligase, C-terminal domain"/>
    <property type="match status" value="1"/>
</dbReference>
<dbReference type="Gene3D" id="3.40.1190.10">
    <property type="entry name" value="Mur-like, catalytic domain"/>
    <property type="match status" value="1"/>
</dbReference>
<dbReference type="Gene3D" id="3.40.1390.10">
    <property type="entry name" value="MurE/MurF, N-terminal domain"/>
    <property type="match status" value="1"/>
</dbReference>
<dbReference type="HAMAP" id="MF_00208">
    <property type="entry name" value="MurE"/>
    <property type="match status" value="1"/>
</dbReference>
<dbReference type="InterPro" id="IPR036565">
    <property type="entry name" value="Mur-like_cat_sf"/>
</dbReference>
<dbReference type="InterPro" id="IPR004101">
    <property type="entry name" value="Mur_ligase_C"/>
</dbReference>
<dbReference type="InterPro" id="IPR036615">
    <property type="entry name" value="Mur_ligase_C_dom_sf"/>
</dbReference>
<dbReference type="InterPro" id="IPR013221">
    <property type="entry name" value="Mur_ligase_cen"/>
</dbReference>
<dbReference type="InterPro" id="IPR000713">
    <property type="entry name" value="Mur_ligase_N"/>
</dbReference>
<dbReference type="InterPro" id="IPR035911">
    <property type="entry name" value="MurE/MurF_N"/>
</dbReference>
<dbReference type="InterPro" id="IPR005761">
    <property type="entry name" value="UDP-N-AcMur-Glu-dNH2Pim_ligase"/>
</dbReference>
<dbReference type="NCBIfam" id="TIGR01085">
    <property type="entry name" value="murE"/>
    <property type="match status" value="1"/>
</dbReference>
<dbReference type="NCBIfam" id="NF001123">
    <property type="entry name" value="PRK00139.1-1"/>
    <property type="match status" value="1"/>
</dbReference>
<dbReference type="NCBIfam" id="NF001124">
    <property type="entry name" value="PRK00139.1-2"/>
    <property type="match status" value="1"/>
</dbReference>
<dbReference type="NCBIfam" id="NF001126">
    <property type="entry name" value="PRK00139.1-4"/>
    <property type="match status" value="1"/>
</dbReference>
<dbReference type="PANTHER" id="PTHR23135">
    <property type="entry name" value="MUR LIGASE FAMILY MEMBER"/>
    <property type="match status" value="1"/>
</dbReference>
<dbReference type="PANTHER" id="PTHR23135:SF4">
    <property type="entry name" value="UDP-N-ACETYLMURAMOYL-L-ALANYL-D-GLUTAMATE--2,6-DIAMINOPIMELATE LIGASE MURE HOMOLOG, CHLOROPLASTIC"/>
    <property type="match status" value="1"/>
</dbReference>
<dbReference type="Pfam" id="PF01225">
    <property type="entry name" value="Mur_ligase"/>
    <property type="match status" value="1"/>
</dbReference>
<dbReference type="Pfam" id="PF02875">
    <property type="entry name" value="Mur_ligase_C"/>
    <property type="match status" value="1"/>
</dbReference>
<dbReference type="Pfam" id="PF08245">
    <property type="entry name" value="Mur_ligase_M"/>
    <property type="match status" value="1"/>
</dbReference>
<dbReference type="SUPFAM" id="SSF53623">
    <property type="entry name" value="MurD-like peptide ligases, catalytic domain"/>
    <property type="match status" value="1"/>
</dbReference>
<dbReference type="SUPFAM" id="SSF53244">
    <property type="entry name" value="MurD-like peptide ligases, peptide-binding domain"/>
    <property type="match status" value="1"/>
</dbReference>
<dbReference type="SUPFAM" id="SSF63418">
    <property type="entry name" value="MurE/MurF N-terminal domain"/>
    <property type="match status" value="1"/>
</dbReference>
<keyword id="KW-0067">ATP-binding</keyword>
<keyword id="KW-0131">Cell cycle</keyword>
<keyword id="KW-0132">Cell division</keyword>
<keyword id="KW-0133">Cell shape</keyword>
<keyword id="KW-0961">Cell wall biogenesis/degradation</keyword>
<keyword id="KW-0963">Cytoplasm</keyword>
<keyword id="KW-0436">Ligase</keyword>
<keyword id="KW-0460">Magnesium</keyword>
<keyword id="KW-0547">Nucleotide-binding</keyword>
<keyword id="KW-0573">Peptidoglycan synthesis</keyword>
<keyword id="KW-1185">Reference proteome</keyword>
<sequence length="495" mass="53669">MNTHSAISELIAPWLELTDPKLAALVITHLELDSRLIKSGDTFVAIQGHAVDGRQFIDKAIAQGANLVLAEADAQHLNGWVEYRAGVPVIYLAELGQHLSELAGRLYGGHHNQLIGVTGTNGKTTITQLIAQWLELLGHKAAVMGTTGNGFLNALEPAANTTGNALQIQATLRDLAERGAQYTALETSSHGLVQGRVKKLHFVAGVFSNLSRDHLDYHGTMEAYAAAKFSLFSEHACQNAIINVDDAVGAQWVKQLPQAIGVSLVTKPNTAQAIWAREVAYAESGITLNFESSWGEGELHAPLIGEFNACNLLLALATLLSLGFEKSALLATAPKLRPVLGRMELFQREQKAKMVVDYAHTPDALEKALRALRVHCAGQLWAIVGCGGDRDRGKRPMMAAIAEQFADRVILTDDNPRSESPQAIVADMVAGLTYPERAHIEHHRFQAASYALQHAGAQDIILLAGKGHEDYQVLANETIHYSDRETAQQLLELQP</sequence>